<comment type="function">
    <text evidence="9">Lytic polysaccharide monooxygenase (LPMO) that depolymerizes crystalline and amorphous polysaccharides via the oxidation of scissile alpha- or beta-(1-4)-glycosidic bonds, yielding exclusively C4 oxidation products (PubMed:32640001). Catalysis by LPMOs requires the reduction of the active-site copper from Cu(II) to Cu(I) by a reducing agent and H(2)O(2) or O(2) as a cosubstrate (PubMed:32640001). In addition to cellulose, also cleaves the beta-(1!4)-glucan backbone of tamarind xyloglucan, but only next to unsubstituted glucosyl units (PubMed:32640001).</text>
</comment>
<comment type="catalytic activity">
    <reaction evidence="9">
        <text>[(1-&gt;4)-beta-D-glucosyl]n+m + reduced acceptor + O2 = 4-dehydro-beta-D-glucosyl-[(1-&gt;4)-beta-D-glucosyl]n-1 + [(1-&gt;4)-beta-D-glucosyl]m + acceptor + H2O.</text>
        <dbReference type="EC" id="1.14.99.56"/>
    </reaction>
</comment>
<comment type="cofactor">
    <cofactor evidence="2">
        <name>Cu(2+)</name>
        <dbReference type="ChEBI" id="CHEBI:29036"/>
    </cofactor>
    <text evidence="2">Binds 1 copper ion per subunit.</text>
</comment>
<comment type="subcellular location">
    <subcellularLocation>
        <location evidence="12">Secreted</location>
    </subcellularLocation>
</comment>
<comment type="induction">
    <text evidence="8">Expression is up-regulated on steam-exploded bagasse as carbon source compared to glucose.</text>
</comment>
<comment type="domain">
    <text evidence="3">Has a modular structure: an endo-beta-1,4-glucanase catalytic module at the N-terminus, a linker rich in serines and threonines, and a C-terminal carbohydrate-binding module (CBM). The CBM domain is essential for binding to and subsequent oxidative degradation of polysaccharide substrate.</text>
</comment>
<comment type="biotechnology">
    <text evidence="2">Lignocellulose is the most abundant polymeric composite on Earth and is a recalcitrant but promising renewable substrate for industrial biotechnology applications. Together with cellobiose dehydrogenases (CDHs) an enzymatic system capable of oxidative cellulose cleavage is formed, which increases the efficiency of cellulases and put LPMOs at focus of biofuel research.</text>
</comment>
<comment type="similarity">
    <text evidence="11">Belongs to the polysaccharide monooxygenase AA9 family.</text>
</comment>
<feature type="signal peptide" evidence="4">
    <location>
        <begin position="1"/>
        <end position="20"/>
    </location>
</feature>
<feature type="chain" id="PRO_5024999738" description="AA9 family lytic polysaccharide monooxygenase A">
    <location>
        <begin position="21"/>
        <end position="373"/>
    </location>
</feature>
<feature type="domain" description="CBM1" evidence="6">
    <location>
        <begin position="335"/>
        <end position="371"/>
    </location>
</feature>
<feature type="region of interest" description="Disordered" evidence="7">
    <location>
        <begin position="36"/>
        <end position="55"/>
    </location>
</feature>
<feature type="region of interest" description="Disordered" evidence="7">
    <location>
        <begin position="234"/>
        <end position="333"/>
    </location>
</feature>
<feature type="compositionally biased region" description="Low complexity" evidence="7">
    <location>
        <begin position="235"/>
        <end position="262"/>
    </location>
</feature>
<feature type="compositionally biased region" description="Low complexity" evidence="7">
    <location>
        <begin position="270"/>
        <end position="323"/>
    </location>
</feature>
<feature type="compositionally biased region" description="Polar residues" evidence="7">
    <location>
        <begin position="324"/>
        <end position="333"/>
    </location>
</feature>
<feature type="binding site" evidence="2">
    <location>
        <position position="21"/>
    </location>
    <ligand>
        <name>Cu(2+)</name>
        <dbReference type="ChEBI" id="CHEBI:29036"/>
        <note>catalytic</note>
    </ligand>
</feature>
<feature type="binding site" evidence="2">
    <location>
        <position position="102"/>
    </location>
    <ligand>
        <name>Cu(2+)</name>
        <dbReference type="ChEBI" id="CHEBI:29036"/>
        <note>catalytic</note>
    </ligand>
</feature>
<feature type="binding site" evidence="1">
    <location>
        <position position="169"/>
    </location>
    <ligand>
        <name>O2</name>
        <dbReference type="ChEBI" id="CHEBI:15379"/>
    </ligand>
</feature>
<feature type="binding site" evidence="1">
    <location>
        <position position="178"/>
    </location>
    <ligand>
        <name>O2</name>
        <dbReference type="ChEBI" id="CHEBI:15379"/>
    </ligand>
</feature>
<feature type="binding site" evidence="2">
    <location>
        <position position="180"/>
    </location>
    <ligand>
        <name>Cu(2+)</name>
        <dbReference type="ChEBI" id="CHEBI:29036"/>
        <note>catalytic</note>
    </ligand>
</feature>
<feature type="glycosylation site" description="N-linked (GlcNAc...) asparagine" evidence="5">
    <location>
        <position position="347"/>
    </location>
</feature>
<feature type="disulfide bond" evidence="2">
    <location>
        <begin position="63"/>
        <end position="183"/>
    </location>
</feature>
<keyword id="KW-0119">Carbohydrate metabolism</keyword>
<keyword id="KW-0136">Cellulose degradation</keyword>
<keyword id="KW-0186">Copper</keyword>
<keyword id="KW-1015">Disulfide bond</keyword>
<keyword id="KW-0325">Glycoprotein</keyword>
<keyword id="KW-0479">Metal-binding</keyword>
<keyword id="KW-0503">Monooxygenase</keyword>
<keyword id="KW-0560">Oxidoreductase</keyword>
<keyword id="KW-0624">Polysaccharide degradation</keyword>
<keyword id="KW-1185">Reference proteome</keyword>
<keyword id="KW-0964">Secreted</keyword>
<keyword id="KW-0732">Signal</keyword>
<sequence length="373" mass="38630">MKSSTFGMLALAAAAKLVSAHTTVHAVWINDVDQGEGNSQSGYIRSPPSNSPITDVTSKDMTCNVNNKATAKTLEVKAGDKITFEWHHDSRSESDDIIASSHNGPILVYMAPTEKGTAGNGWVKIAEDGYTDGTWAVETLIKNRGKHSVTVPDVAAGEYLFRPEIIALHEGNREGGAQFYMECVQVKVTSSGSKTLPEGVSIPGAYTATDKGILFNIYDSFDSYPIPGPAVWDGASGSSSSSSSSASASAPAPTSAAPAPSSFTTIAKQPATSSSTEAPSTENTPSETTSTTSAIVSTTAVASTTAPATPSTTSAIASSAAPTNSVPQPSSNAGGAVKEWYQCGGLNYSGSTQCEEGLTCKKWNPYYHQCVSA</sequence>
<reference key="1">
    <citation type="journal article" date="2020" name="Nat. Commun.">
        <title>A comparative genomics study of 23 Aspergillus species from section Flavi.</title>
        <authorList>
            <person name="Kjaerboelling I."/>
            <person name="Vesth T."/>
            <person name="Frisvad J.C."/>
            <person name="Nybo J.L."/>
            <person name="Theobald S."/>
            <person name="Kildgaard S."/>
            <person name="Petersen T.I."/>
            <person name="Kuo A."/>
            <person name="Sato A."/>
            <person name="Lyhne E.K."/>
            <person name="Kogle M.E."/>
            <person name="Wiebenga A."/>
            <person name="Kun R.S."/>
            <person name="Lubbers R.J.M."/>
            <person name="Maekelae M.R."/>
            <person name="Barry K."/>
            <person name="Chovatia M."/>
            <person name="Clum A."/>
            <person name="Daum C."/>
            <person name="Haridas S."/>
            <person name="He G."/>
            <person name="LaButti K."/>
            <person name="Lipzen A."/>
            <person name="Mondo S."/>
            <person name="Pangilinan J."/>
            <person name="Riley R."/>
            <person name="Salamov A."/>
            <person name="Simmons B.A."/>
            <person name="Magnuson J.K."/>
            <person name="Henrissat B."/>
            <person name="Mortensen U.H."/>
            <person name="Larsen T.O."/>
            <person name="de Vries R.P."/>
            <person name="Grigoriev I.V."/>
            <person name="Machida M."/>
            <person name="Baker S.E."/>
            <person name="Andersen M.R."/>
        </authorList>
    </citation>
    <scope>NUCLEOTIDE SEQUENCE [LARGE SCALE GENOMIC DNA]</scope>
    <source>
        <strain>CBS 117626</strain>
    </source>
</reference>
<reference key="2">
    <citation type="journal article" date="2018" name="Front. Bioeng. Biotechnol.">
        <title>Analysis of the Transcriptome in Aspergillus tamarii During Enzymatic Degradation of Sugarcane Bagasse.</title>
        <authorList>
            <person name="Midorikawa G.E.O."/>
            <person name="Correa C.L."/>
            <person name="Noronha E.F."/>
            <person name="Filho E.X.F."/>
            <person name="Togawa R.C."/>
            <person name="Costa M.M.D.C."/>
            <person name="Silva-Junior O.B."/>
            <person name="Grynberg P."/>
            <person name="Miller R.N.G."/>
        </authorList>
    </citation>
    <scope>INDUCTION</scope>
</reference>
<reference key="3">
    <citation type="journal article" date="2020" name="PLoS ONE">
        <title>Characterization of two family AA9 LPMOs from Aspergillus tamarii with distinct activities on xyloglucan reveals structural differences linked to cleavage specificity.</title>
        <authorList>
            <person name="Monclaro A.V."/>
            <person name="Petrovic D.M."/>
            <person name="Alves G.S.C."/>
            <person name="Costa M.M.C."/>
            <person name="Midorikawa G.E.O."/>
            <person name="Miller R.N.G."/>
            <person name="Filho E.X.F."/>
            <person name="Eijsink V.G.H."/>
            <person name="Varnai A."/>
        </authorList>
    </citation>
    <scope>FUNCTION</scope>
    <scope>CATALYTIC ACTIVITY</scope>
</reference>
<gene>
    <name type="ORF">BDV40DRAFT_254541</name>
</gene>
<accession>A0A5N6V703</accession>
<protein>
    <recommendedName>
        <fullName evidence="10">AA9 family lytic polysaccharide monooxygenase A</fullName>
        <shortName evidence="10">AtAA9A</shortName>
        <ecNumber evidence="9">1.14.99.56</ecNumber>
    </recommendedName>
    <alternativeName>
        <fullName evidence="11">Cellulase AA9A</fullName>
    </alternativeName>
    <alternativeName>
        <fullName evidence="11">Endo-beta-1,4-glucanase AA9A</fullName>
        <shortName evidence="11">Endoglucanase AA9A</shortName>
    </alternativeName>
    <alternativeName>
        <fullName evidence="11">Glycosyl hydrolase 61 family protein AA9A</fullName>
    </alternativeName>
</protein>
<organism>
    <name type="scientific">Aspergillus tamarii</name>
    <dbReference type="NCBI Taxonomy" id="41984"/>
    <lineage>
        <taxon>Eukaryota</taxon>
        <taxon>Fungi</taxon>
        <taxon>Dikarya</taxon>
        <taxon>Ascomycota</taxon>
        <taxon>Pezizomycotina</taxon>
        <taxon>Eurotiomycetes</taxon>
        <taxon>Eurotiomycetidae</taxon>
        <taxon>Eurotiales</taxon>
        <taxon>Aspergillaceae</taxon>
        <taxon>Aspergillus</taxon>
        <taxon>Aspergillus subgen. Circumdati</taxon>
    </lineage>
</organism>
<dbReference type="EC" id="1.14.99.56" evidence="9"/>
<dbReference type="EMBL" id="ML738592">
    <property type="protein sequence ID" value="KAE8166795.1"/>
    <property type="molecule type" value="Genomic_DNA"/>
</dbReference>
<dbReference type="SMR" id="A0A5N6V703"/>
<dbReference type="OrthoDB" id="5558646at2759"/>
<dbReference type="Proteomes" id="UP000326950">
    <property type="component" value="Unassembled WGS sequence"/>
</dbReference>
<dbReference type="GO" id="GO:0005576">
    <property type="term" value="C:extracellular region"/>
    <property type="evidence" value="ECO:0007669"/>
    <property type="project" value="UniProtKB-SubCell"/>
</dbReference>
<dbReference type="GO" id="GO:0008810">
    <property type="term" value="F:cellulase activity"/>
    <property type="evidence" value="ECO:0007669"/>
    <property type="project" value="UniProtKB-EC"/>
</dbReference>
<dbReference type="GO" id="GO:0030248">
    <property type="term" value="F:cellulose binding"/>
    <property type="evidence" value="ECO:0007669"/>
    <property type="project" value="InterPro"/>
</dbReference>
<dbReference type="GO" id="GO:0046872">
    <property type="term" value="F:metal ion binding"/>
    <property type="evidence" value="ECO:0007669"/>
    <property type="project" value="UniProtKB-KW"/>
</dbReference>
<dbReference type="GO" id="GO:0004497">
    <property type="term" value="F:monooxygenase activity"/>
    <property type="evidence" value="ECO:0007669"/>
    <property type="project" value="UniProtKB-KW"/>
</dbReference>
<dbReference type="GO" id="GO:0030245">
    <property type="term" value="P:cellulose catabolic process"/>
    <property type="evidence" value="ECO:0007669"/>
    <property type="project" value="UniProtKB-KW"/>
</dbReference>
<dbReference type="CDD" id="cd21175">
    <property type="entry name" value="LPMO_AA9"/>
    <property type="match status" value="1"/>
</dbReference>
<dbReference type="Gene3D" id="2.70.50.70">
    <property type="match status" value="1"/>
</dbReference>
<dbReference type="InterPro" id="IPR049892">
    <property type="entry name" value="AA9"/>
</dbReference>
<dbReference type="InterPro" id="IPR005103">
    <property type="entry name" value="AA9_LPMO"/>
</dbReference>
<dbReference type="InterPro" id="IPR035971">
    <property type="entry name" value="CBD_sf"/>
</dbReference>
<dbReference type="InterPro" id="IPR000254">
    <property type="entry name" value="Cellulose-bd_dom_fun"/>
</dbReference>
<dbReference type="PANTHER" id="PTHR33353:SF17">
    <property type="entry name" value="ENDO-BETA-1,4-GLUCANASE D"/>
    <property type="match status" value="1"/>
</dbReference>
<dbReference type="PANTHER" id="PTHR33353">
    <property type="entry name" value="PUTATIVE (AFU_ORTHOLOGUE AFUA_1G12560)-RELATED"/>
    <property type="match status" value="1"/>
</dbReference>
<dbReference type="Pfam" id="PF03443">
    <property type="entry name" value="AA9"/>
    <property type="match status" value="1"/>
</dbReference>
<dbReference type="Pfam" id="PF00734">
    <property type="entry name" value="CBM_1"/>
    <property type="match status" value="1"/>
</dbReference>
<dbReference type="SMART" id="SM00236">
    <property type="entry name" value="fCBD"/>
    <property type="match status" value="1"/>
</dbReference>
<dbReference type="SUPFAM" id="SSF57180">
    <property type="entry name" value="Cellulose-binding domain"/>
    <property type="match status" value="1"/>
</dbReference>
<dbReference type="PROSITE" id="PS00562">
    <property type="entry name" value="CBM1_1"/>
    <property type="match status" value="1"/>
</dbReference>
<dbReference type="PROSITE" id="PS51164">
    <property type="entry name" value="CBM1_2"/>
    <property type="match status" value="1"/>
</dbReference>
<name>LP9A_ASPTM</name>
<proteinExistence type="evidence at protein level"/>
<evidence type="ECO:0000250" key="1">
    <source>
        <dbReference type="UniProtKB" id="Q1K8B6"/>
    </source>
</evidence>
<evidence type="ECO:0000250" key="2">
    <source>
        <dbReference type="UniProtKB" id="Q4WP32"/>
    </source>
</evidence>
<evidence type="ECO:0000250" key="3">
    <source>
        <dbReference type="UniProtKB" id="Q7S439"/>
    </source>
</evidence>
<evidence type="ECO:0000255" key="4"/>
<evidence type="ECO:0000255" key="5">
    <source>
        <dbReference type="PROSITE-ProRule" id="PRU00498"/>
    </source>
</evidence>
<evidence type="ECO:0000255" key="6">
    <source>
        <dbReference type="PROSITE-ProRule" id="PRU00597"/>
    </source>
</evidence>
<evidence type="ECO:0000256" key="7">
    <source>
        <dbReference type="SAM" id="MobiDB-lite"/>
    </source>
</evidence>
<evidence type="ECO:0000269" key="8">
    <source>
    </source>
</evidence>
<evidence type="ECO:0000269" key="9">
    <source>
    </source>
</evidence>
<evidence type="ECO:0000303" key="10">
    <source>
    </source>
</evidence>
<evidence type="ECO:0000305" key="11"/>
<evidence type="ECO:0000305" key="12">
    <source>
    </source>
</evidence>